<gene>
    <name evidence="1" type="primary">erpA</name>
    <name type="ordered locus">NMC0498</name>
</gene>
<sequence>MSDESPIIFTDSCCAKVADLIAEENNPDLKLRVFVNGGGCSGFQYGFTFDEIKNDDDFEIEKNGLVFLVDPMSYQYLVGAEIDYTESLQGSQFVIRNPNAETTCGCGSSFSV</sequence>
<protein>
    <recommendedName>
        <fullName evidence="1">Putative iron-sulfur cluster insertion protein ErpA</fullName>
    </recommendedName>
</protein>
<comment type="function">
    <text evidence="1">Required for insertion of 4Fe-4S clusters.</text>
</comment>
<comment type="cofactor">
    <cofactor evidence="1">
        <name>iron-sulfur cluster</name>
        <dbReference type="ChEBI" id="CHEBI:30408"/>
    </cofactor>
    <text evidence="1">Binds 1 iron-sulfur cluster per subunit.</text>
</comment>
<comment type="subunit">
    <text evidence="1">Homodimer.</text>
</comment>
<comment type="similarity">
    <text evidence="1">Belongs to the HesB/IscA family.</text>
</comment>
<keyword id="KW-0408">Iron</keyword>
<keyword id="KW-0411">Iron-sulfur</keyword>
<keyword id="KW-0479">Metal-binding</keyword>
<reference key="1">
    <citation type="journal article" date="2007" name="PLoS Genet.">
        <title>Meningococcal genetic variation mechanisms viewed through comparative analysis of serogroup C strain FAM18.</title>
        <authorList>
            <person name="Bentley S.D."/>
            <person name="Vernikos G.S."/>
            <person name="Snyder L.A.S."/>
            <person name="Churcher C."/>
            <person name="Arrowsmith C."/>
            <person name="Chillingworth T."/>
            <person name="Cronin A."/>
            <person name="Davis P.H."/>
            <person name="Holroyd N.E."/>
            <person name="Jagels K."/>
            <person name="Maddison M."/>
            <person name="Moule S."/>
            <person name="Rabbinowitsch E."/>
            <person name="Sharp S."/>
            <person name="Unwin L."/>
            <person name="Whitehead S."/>
            <person name="Quail M.A."/>
            <person name="Achtman M."/>
            <person name="Barrell B.G."/>
            <person name="Saunders N.J."/>
            <person name="Parkhill J."/>
        </authorList>
    </citation>
    <scope>NUCLEOTIDE SEQUENCE [LARGE SCALE GENOMIC DNA]</scope>
    <source>
        <strain>ATCC 700532 / DSM 15464 / FAM18</strain>
    </source>
</reference>
<dbReference type="EMBL" id="AM421808">
    <property type="protein sequence ID" value="CAM09796.1"/>
    <property type="molecule type" value="Genomic_DNA"/>
</dbReference>
<dbReference type="RefSeq" id="WP_002219692.1">
    <property type="nucleotide sequence ID" value="NC_008767.1"/>
</dbReference>
<dbReference type="SMR" id="A1KSG6"/>
<dbReference type="GeneID" id="93386629"/>
<dbReference type="KEGG" id="nmc:NMC0498"/>
<dbReference type="HOGENOM" id="CLU_069054_5_3_4"/>
<dbReference type="Proteomes" id="UP000002286">
    <property type="component" value="Chromosome"/>
</dbReference>
<dbReference type="GO" id="GO:0051537">
    <property type="term" value="F:2 iron, 2 sulfur cluster binding"/>
    <property type="evidence" value="ECO:0007669"/>
    <property type="project" value="TreeGrafter"/>
</dbReference>
<dbReference type="GO" id="GO:0051539">
    <property type="term" value="F:4 iron, 4 sulfur cluster binding"/>
    <property type="evidence" value="ECO:0007669"/>
    <property type="project" value="TreeGrafter"/>
</dbReference>
<dbReference type="GO" id="GO:0005506">
    <property type="term" value="F:iron ion binding"/>
    <property type="evidence" value="ECO:0007669"/>
    <property type="project" value="UniProtKB-UniRule"/>
</dbReference>
<dbReference type="GO" id="GO:0016226">
    <property type="term" value="P:iron-sulfur cluster assembly"/>
    <property type="evidence" value="ECO:0007669"/>
    <property type="project" value="UniProtKB-UniRule"/>
</dbReference>
<dbReference type="FunFam" id="2.60.300.12:FF:000002">
    <property type="entry name" value="Iron-sulfur cluster insertion protein ErpA"/>
    <property type="match status" value="1"/>
</dbReference>
<dbReference type="Gene3D" id="2.60.300.12">
    <property type="entry name" value="HesB-like domain"/>
    <property type="match status" value="1"/>
</dbReference>
<dbReference type="HAMAP" id="MF_01380">
    <property type="entry name" value="Fe_S_insert_ErpA"/>
    <property type="match status" value="1"/>
</dbReference>
<dbReference type="InterPro" id="IPR000361">
    <property type="entry name" value="FeS_biogenesis"/>
</dbReference>
<dbReference type="InterPro" id="IPR016092">
    <property type="entry name" value="FeS_cluster_insertion"/>
</dbReference>
<dbReference type="InterPro" id="IPR017870">
    <property type="entry name" value="FeS_cluster_insertion_CS"/>
</dbReference>
<dbReference type="InterPro" id="IPR023063">
    <property type="entry name" value="FeS_cluster_insertion_RrpA"/>
</dbReference>
<dbReference type="InterPro" id="IPR035903">
    <property type="entry name" value="HesB-like_dom_sf"/>
</dbReference>
<dbReference type="NCBIfam" id="TIGR00049">
    <property type="entry name" value="iron-sulfur cluster assembly accessory protein"/>
    <property type="match status" value="1"/>
</dbReference>
<dbReference type="NCBIfam" id="NF010147">
    <property type="entry name" value="PRK13623.1"/>
    <property type="match status" value="1"/>
</dbReference>
<dbReference type="PANTHER" id="PTHR43011">
    <property type="entry name" value="IRON-SULFUR CLUSTER ASSEMBLY 2 HOMOLOG, MITOCHONDRIAL"/>
    <property type="match status" value="1"/>
</dbReference>
<dbReference type="PANTHER" id="PTHR43011:SF1">
    <property type="entry name" value="IRON-SULFUR CLUSTER ASSEMBLY 2 HOMOLOG, MITOCHONDRIAL"/>
    <property type="match status" value="1"/>
</dbReference>
<dbReference type="Pfam" id="PF01521">
    <property type="entry name" value="Fe-S_biosyn"/>
    <property type="match status" value="1"/>
</dbReference>
<dbReference type="SUPFAM" id="SSF89360">
    <property type="entry name" value="HesB-like domain"/>
    <property type="match status" value="1"/>
</dbReference>
<dbReference type="PROSITE" id="PS01152">
    <property type="entry name" value="HESB"/>
    <property type="match status" value="1"/>
</dbReference>
<organism>
    <name type="scientific">Neisseria meningitidis serogroup C / serotype 2a (strain ATCC 700532 / DSM 15464 / FAM18)</name>
    <dbReference type="NCBI Taxonomy" id="272831"/>
    <lineage>
        <taxon>Bacteria</taxon>
        <taxon>Pseudomonadati</taxon>
        <taxon>Pseudomonadota</taxon>
        <taxon>Betaproteobacteria</taxon>
        <taxon>Neisseriales</taxon>
        <taxon>Neisseriaceae</taxon>
        <taxon>Neisseria</taxon>
    </lineage>
</organism>
<evidence type="ECO:0000255" key="1">
    <source>
        <dbReference type="HAMAP-Rule" id="MF_01380"/>
    </source>
</evidence>
<accession>A1KSG6</accession>
<name>ERPA_NEIMF</name>
<feature type="chain" id="PRO_0000311510" description="Putative iron-sulfur cluster insertion protein ErpA">
    <location>
        <begin position="1"/>
        <end position="112"/>
    </location>
</feature>
<feature type="binding site" evidence="1">
    <location>
        <position position="40"/>
    </location>
    <ligand>
        <name>iron-sulfur cluster</name>
        <dbReference type="ChEBI" id="CHEBI:30408"/>
    </ligand>
</feature>
<feature type="binding site" evidence="1">
    <location>
        <position position="104"/>
    </location>
    <ligand>
        <name>iron-sulfur cluster</name>
        <dbReference type="ChEBI" id="CHEBI:30408"/>
    </ligand>
</feature>
<feature type="binding site" evidence="1">
    <location>
        <position position="106"/>
    </location>
    <ligand>
        <name>iron-sulfur cluster</name>
        <dbReference type="ChEBI" id="CHEBI:30408"/>
    </ligand>
</feature>
<proteinExistence type="inferred from homology"/>